<gene>
    <name evidence="1" type="primary">rsmH</name>
    <name type="synonym">mraW</name>
    <name type="ordered locus">Tmel_1727</name>
</gene>
<evidence type="ECO:0000255" key="1">
    <source>
        <dbReference type="HAMAP-Rule" id="MF_01007"/>
    </source>
</evidence>
<evidence type="ECO:0000256" key="2">
    <source>
        <dbReference type="SAM" id="MobiDB-lite"/>
    </source>
</evidence>
<accession>A6LNR5</accession>
<protein>
    <recommendedName>
        <fullName evidence="1">Ribosomal RNA small subunit methyltransferase H</fullName>
        <ecNumber evidence="1">2.1.1.199</ecNumber>
    </recommendedName>
    <alternativeName>
        <fullName evidence="1">16S rRNA m(4)C1402 methyltransferase</fullName>
    </alternativeName>
    <alternativeName>
        <fullName evidence="1">rRNA (cytosine-N(4)-)-methyltransferase RsmH</fullName>
    </alternativeName>
</protein>
<proteinExistence type="inferred from homology"/>
<keyword id="KW-0963">Cytoplasm</keyword>
<keyword id="KW-0489">Methyltransferase</keyword>
<keyword id="KW-0698">rRNA processing</keyword>
<keyword id="KW-0949">S-adenosyl-L-methionine</keyword>
<keyword id="KW-0808">Transferase</keyword>
<organism>
    <name type="scientific">Thermosipho melanesiensis (strain DSM 12029 / CIP 104789 / BI429)</name>
    <dbReference type="NCBI Taxonomy" id="391009"/>
    <lineage>
        <taxon>Bacteria</taxon>
        <taxon>Thermotogati</taxon>
        <taxon>Thermotogota</taxon>
        <taxon>Thermotogae</taxon>
        <taxon>Thermotogales</taxon>
        <taxon>Fervidobacteriaceae</taxon>
        <taxon>Thermosipho</taxon>
    </lineage>
</organism>
<name>RSMH_THEM4</name>
<sequence length="291" mass="33372">MRKYNDKHIPVLPNEVVEYLLWKDNGIYVDCTAGEGGHTFLIAKKCPNSRVIAIDVDLEVLEIAQKNLKAFHNVILLKASYVDLPVVLKSLGIERVSGILADLGISTYQLKAEGRGFSFNRDEPLDMRMDIQQDTSAHKITNFYSEEKLSKIIFKYGEERFARRIAKQIVKNRPINTTKELVEIIKKALPPSEIRKRKRHFATKTFQAIRIEVNKELKNIEQLLKNAEELLEIGGRLAIISFHSLEDRIVKHFIKNSNNLKHIAGPIKPTQEETKNNPRARSAKLRVAERI</sequence>
<comment type="function">
    <text evidence="1">Specifically methylates the N4 position of cytidine in position 1402 (C1402) of 16S rRNA.</text>
</comment>
<comment type="catalytic activity">
    <reaction evidence="1">
        <text>cytidine(1402) in 16S rRNA + S-adenosyl-L-methionine = N(4)-methylcytidine(1402) in 16S rRNA + S-adenosyl-L-homocysteine + H(+)</text>
        <dbReference type="Rhea" id="RHEA:42928"/>
        <dbReference type="Rhea" id="RHEA-COMP:10286"/>
        <dbReference type="Rhea" id="RHEA-COMP:10287"/>
        <dbReference type="ChEBI" id="CHEBI:15378"/>
        <dbReference type="ChEBI" id="CHEBI:57856"/>
        <dbReference type="ChEBI" id="CHEBI:59789"/>
        <dbReference type="ChEBI" id="CHEBI:74506"/>
        <dbReference type="ChEBI" id="CHEBI:82748"/>
        <dbReference type="EC" id="2.1.1.199"/>
    </reaction>
</comment>
<comment type="subcellular location">
    <subcellularLocation>
        <location evidence="1">Cytoplasm</location>
    </subcellularLocation>
</comment>
<comment type="similarity">
    <text evidence="1">Belongs to the methyltransferase superfamily. RsmH family.</text>
</comment>
<reference key="1">
    <citation type="submission" date="2007-05" db="EMBL/GenBank/DDBJ databases">
        <title>Complete sequence of Thermosipho melanesiensis BI429.</title>
        <authorList>
            <consortium name="US DOE Joint Genome Institute"/>
            <person name="Copeland A."/>
            <person name="Lucas S."/>
            <person name="Lapidus A."/>
            <person name="Barry K."/>
            <person name="Glavina del Rio T."/>
            <person name="Dalin E."/>
            <person name="Tice H."/>
            <person name="Pitluck S."/>
            <person name="Chertkov O."/>
            <person name="Brettin T."/>
            <person name="Bruce D."/>
            <person name="Detter J.C."/>
            <person name="Han C."/>
            <person name="Schmutz J."/>
            <person name="Larimer F."/>
            <person name="Land M."/>
            <person name="Hauser L."/>
            <person name="Kyrpides N."/>
            <person name="Mikhailova N."/>
            <person name="Nelson K."/>
            <person name="Gogarten J.P."/>
            <person name="Noll K."/>
            <person name="Richardson P."/>
        </authorList>
    </citation>
    <scope>NUCLEOTIDE SEQUENCE [LARGE SCALE GENOMIC DNA]</scope>
    <source>
        <strain>DSM 12029 / CIP 104789 / BI429</strain>
    </source>
</reference>
<dbReference type="EC" id="2.1.1.199" evidence="1"/>
<dbReference type="EMBL" id="CP000716">
    <property type="protein sequence ID" value="ABR31566.1"/>
    <property type="molecule type" value="Genomic_DNA"/>
</dbReference>
<dbReference type="RefSeq" id="WP_012057925.1">
    <property type="nucleotide sequence ID" value="NC_009616.1"/>
</dbReference>
<dbReference type="SMR" id="A6LNR5"/>
<dbReference type="STRING" id="391009.Tmel_1727"/>
<dbReference type="KEGG" id="tme:Tmel_1727"/>
<dbReference type="eggNOG" id="COG0275">
    <property type="taxonomic scope" value="Bacteria"/>
</dbReference>
<dbReference type="HOGENOM" id="CLU_038422_3_0_0"/>
<dbReference type="OrthoDB" id="9806637at2"/>
<dbReference type="Proteomes" id="UP000001110">
    <property type="component" value="Chromosome"/>
</dbReference>
<dbReference type="GO" id="GO:0005737">
    <property type="term" value="C:cytoplasm"/>
    <property type="evidence" value="ECO:0007669"/>
    <property type="project" value="UniProtKB-SubCell"/>
</dbReference>
<dbReference type="GO" id="GO:0071424">
    <property type="term" value="F:rRNA (cytosine-N4-)-methyltransferase activity"/>
    <property type="evidence" value="ECO:0007669"/>
    <property type="project" value="UniProtKB-UniRule"/>
</dbReference>
<dbReference type="GO" id="GO:0070475">
    <property type="term" value="P:rRNA base methylation"/>
    <property type="evidence" value="ECO:0007669"/>
    <property type="project" value="UniProtKB-UniRule"/>
</dbReference>
<dbReference type="CDD" id="cd02440">
    <property type="entry name" value="AdoMet_MTases"/>
    <property type="match status" value="1"/>
</dbReference>
<dbReference type="Gene3D" id="1.10.150.170">
    <property type="entry name" value="Putative methyltransferase TM0872, insert domain"/>
    <property type="match status" value="1"/>
</dbReference>
<dbReference type="Gene3D" id="3.40.50.150">
    <property type="entry name" value="Vaccinia Virus protein VP39"/>
    <property type="match status" value="1"/>
</dbReference>
<dbReference type="HAMAP" id="MF_01007">
    <property type="entry name" value="16SrRNA_methyltr_H"/>
    <property type="match status" value="1"/>
</dbReference>
<dbReference type="InterPro" id="IPR002903">
    <property type="entry name" value="RsmH"/>
</dbReference>
<dbReference type="InterPro" id="IPR023397">
    <property type="entry name" value="SAM-dep_MeTrfase_MraW_recog"/>
</dbReference>
<dbReference type="InterPro" id="IPR029063">
    <property type="entry name" value="SAM-dependent_MTases_sf"/>
</dbReference>
<dbReference type="NCBIfam" id="TIGR00006">
    <property type="entry name" value="16S rRNA (cytosine(1402)-N(4))-methyltransferase RsmH"/>
    <property type="match status" value="1"/>
</dbReference>
<dbReference type="PANTHER" id="PTHR11265:SF0">
    <property type="entry name" value="12S RRNA N4-METHYLCYTIDINE METHYLTRANSFERASE"/>
    <property type="match status" value="1"/>
</dbReference>
<dbReference type="PANTHER" id="PTHR11265">
    <property type="entry name" value="S-ADENOSYL-METHYLTRANSFERASE MRAW"/>
    <property type="match status" value="1"/>
</dbReference>
<dbReference type="Pfam" id="PF01795">
    <property type="entry name" value="Methyltransf_5"/>
    <property type="match status" value="1"/>
</dbReference>
<dbReference type="PIRSF" id="PIRSF004486">
    <property type="entry name" value="MraW"/>
    <property type="match status" value="1"/>
</dbReference>
<dbReference type="SUPFAM" id="SSF81799">
    <property type="entry name" value="Putative methyltransferase TM0872, insert domain"/>
    <property type="match status" value="1"/>
</dbReference>
<dbReference type="SUPFAM" id="SSF53335">
    <property type="entry name" value="S-adenosyl-L-methionine-dependent methyltransferases"/>
    <property type="match status" value="1"/>
</dbReference>
<feature type="chain" id="PRO_0000387192" description="Ribosomal RNA small subunit methyltransferase H">
    <location>
        <begin position="1"/>
        <end position="291"/>
    </location>
</feature>
<feature type="region of interest" description="Disordered" evidence="2">
    <location>
        <begin position="268"/>
        <end position="291"/>
    </location>
</feature>
<feature type="binding site" evidence="1">
    <location>
        <begin position="36"/>
        <end position="38"/>
    </location>
    <ligand>
        <name>S-adenosyl-L-methionine</name>
        <dbReference type="ChEBI" id="CHEBI:59789"/>
    </ligand>
</feature>
<feature type="binding site" evidence="1">
    <location>
        <position position="55"/>
    </location>
    <ligand>
        <name>S-adenosyl-L-methionine</name>
        <dbReference type="ChEBI" id="CHEBI:59789"/>
    </ligand>
</feature>
<feature type="binding site" evidence="1">
    <location>
        <position position="88"/>
    </location>
    <ligand>
        <name>S-adenosyl-L-methionine</name>
        <dbReference type="ChEBI" id="CHEBI:59789"/>
    </ligand>
</feature>
<feature type="binding site" evidence="1">
    <location>
        <position position="102"/>
    </location>
    <ligand>
        <name>S-adenosyl-L-methionine</name>
        <dbReference type="ChEBI" id="CHEBI:59789"/>
    </ligand>
</feature>
<feature type="binding site" evidence="1">
    <location>
        <position position="109"/>
    </location>
    <ligand>
        <name>S-adenosyl-L-methionine</name>
        <dbReference type="ChEBI" id="CHEBI:59789"/>
    </ligand>
</feature>